<reference key="1">
    <citation type="journal article" date="2003" name="Arch. Biochem. Biophys.">
        <title>Amino acid sequence, biochemical characterization, and comparative modeling of a nonspecific lipid transfer protein from Amaranthus hypochondriacus.</title>
        <authorList>
            <person name="Ramirez-Medeles M.C."/>
            <person name="Aguilar-Ramirez M.B."/>
            <person name="Miguel R.N."/>
            <person name="Bolanos-Garcia V.M."/>
            <person name="Garcia-Hernandez E."/>
            <person name="Soriano-Garcia M."/>
        </authorList>
    </citation>
    <scope>PROTEIN SEQUENCE</scope>
    <scope>MASS SPECTROMETRY</scope>
    <scope>CIRCULAR DICHROISM ANALYSIS</scope>
    <scope>3D-STRUCTURE MODELING</scope>
    <source>
        <strain>cv. Mercado</strain>
        <tissue>Seed</tissue>
    </source>
</reference>
<evidence type="ECO:0000250" key="1"/>
<evidence type="ECO:0000269" key="2">
    <source>
    </source>
</evidence>
<evidence type="ECO:0000305" key="3"/>
<sequence length="94" mass="9747">AVTCTVVTKALGPCMTYLKGTGATPPPANCCAGVRSLKAAAQTVADRRMACNCMKSAAQKTKSLNYKVAARLASQCGVRMSYSVSPNVNCNSVQ</sequence>
<protein>
    <recommendedName>
        <fullName>Non-specific lipid-transfer protein 1</fullName>
        <shortName>LTP 1</shortName>
        <shortName>NS-LTP1</shortName>
    </recommendedName>
</protein>
<accession>P83167</accession>
<feature type="chain" id="PRO_0000153868" description="Non-specific lipid-transfer protein 1">
    <location>
        <begin position="1"/>
        <end position="94"/>
    </location>
</feature>
<feature type="disulfide bond" evidence="1">
    <location>
        <begin position="4"/>
        <end position="53"/>
    </location>
</feature>
<feature type="disulfide bond" evidence="1">
    <location>
        <begin position="14"/>
        <end position="30"/>
    </location>
</feature>
<feature type="disulfide bond" evidence="1">
    <location>
        <begin position="31"/>
        <end position="76"/>
    </location>
</feature>
<feature type="disulfide bond" evidence="1">
    <location>
        <begin position="51"/>
        <end position="90"/>
    </location>
</feature>
<keyword id="KW-0903">Direct protein sequencing</keyword>
<keyword id="KW-1015">Disulfide bond</keyword>
<keyword id="KW-0446">Lipid-binding</keyword>
<keyword id="KW-0813">Transport</keyword>
<organism>
    <name type="scientific">Amaranthus hypochondriacus</name>
    <name type="common">Prince-of-Wales feather</name>
    <name type="synonym">Amaranthus hybridus var. hypochondriacus</name>
    <dbReference type="NCBI Taxonomy" id="28502"/>
    <lineage>
        <taxon>Eukaryota</taxon>
        <taxon>Viridiplantae</taxon>
        <taxon>Streptophyta</taxon>
        <taxon>Embryophyta</taxon>
        <taxon>Tracheophyta</taxon>
        <taxon>Spermatophyta</taxon>
        <taxon>Magnoliopsida</taxon>
        <taxon>eudicotyledons</taxon>
        <taxon>Gunneridae</taxon>
        <taxon>Pentapetalae</taxon>
        <taxon>Caryophyllales</taxon>
        <taxon>Amaranthaceae</taxon>
        <taxon>Amaranthus</taxon>
    </lineage>
</organism>
<name>NLTP1_AMAHP</name>
<dbReference type="SMR" id="P83167"/>
<dbReference type="GO" id="GO:0008289">
    <property type="term" value="F:lipid binding"/>
    <property type="evidence" value="ECO:0007669"/>
    <property type="project" value="UniProtKB-KW"/>
</dbReference>
<dbReference type="GO" id="GO:0006869">
    <property type="term" value="P:lipid transport"/>
    <property type="evidence" value="ECO:0007669"/>
    <property type="project" value="InterPro"/>
</dbReference>
<dbReference type="CDD" id="cd01960">
    <property type="entry name" value="nsLTP1"/>
    <property type="match status" value="1"/>
</dbReference>
<dbReference type="Gene3D" id="1.10.110.10">
    <property type="entry name" value="Plant lipid-transfer and hydrophobic proteins"/>
    <property type="match status" value="1"/>
</dbReference>
<dbReference type="InterPro" id="IPR036312">
    <property type="entry name" value="Bifun_inhib/LTP/seed_sf"/>
</dbReference>
<dbReference type="InterPro" id="IPR016140">
    <property type="entry name" value="Bifunc_inhib/LTP/seed_store"/>
</dbReference>
<dbReference type="InterPro" id="IPR000528">
    <property type="entry name" value="Plant_nsLTP"/>
</dbReference>
<dbReference type="PANTHER" id="PTHR33076">
    <property type="entry name" value="NON-SPECIFIC LIPID-TRANSFER PROTEIN 2-RELATED"/>
    <property type="match status" value="1"/>
</dbReference>
<dbReference type="Pfam" id="PF00234">
    <property type="entry name" value="Tryp_alpha_amyl"/>
    <property type="match status" value="1"/>
</dbReference>
<dbReference type="PRINTS" id="PR00382">
    <property type="entry name" value="LIPIDTRNSFER"/>
</dbReference>
<dbReference type="SMART" id="SM00499">
    <property type="entry name" value="AAI"/>
    <property type="match status" value="1"/>
</dbReference>
<dbReference type="SUPFAM" id="SSF47699">
    <property type="entry name" value="Bifunctional inhibitor/lipid-transfer protein/seed storage 2S albumin"/>
    <property type="match status" value="1"/>
</dbReference>
<dbReference type="PROSITE" id="PS00597">
    <property type="entry name" value="PLANT_LTP"/>
    <property type="match status" value="1"/>
</dbReference>
<proteinExistence type="evidence at protein level"/>
<comment type="function">
    <text evidence="1">Plant non-specific lipid-transfer proteins transfer phospholipids as well as galactolipids across membranes. May play a role in wax or cutin deposition in the cell walls of expanding epidermal cells and certain secretory tissues (By similarity).</text>
</comment>
<comment type="mass spectrometry" mass="9747.29" method="MALDI" evidence="2"/>
<comment type="similarity">
    <text evidence="3">Belongs to the plant LTP family.</text>
</comment>